<accession>P19217</accession>
<gene>
    <name type="primary">SULT1E1</name>
    <name type="synonym">OST</name>
    <name type="synonym">STE</name>
</gene>
<reference key="1">
    <citation type="journal article" date="1988" name="Aust. J. Biol. Sci.">
        <title>Oestrogen sulfotransferase: molecular cloning and sequencing of cDNA for the bovine placental enzyme.</title>
        <authorList>
            <person name="Nash A.R."/>
            <person name="Glenn W.K."/>
            <person name="Moore S.S."/>
            <person name="Kerr J."/>
            <person name="Thompson A.R."/>
            <person name="Thompson E.O.P."/>
        </authorList>
    </citation>
    <scope>NUCLEOTIDE SEQUENCE [MRNA]</scope>
    <source>
        <tissue>Placenta</tissue>
    </source>
</reference>
<reference key="2">
    <citation type="journal article" date="1988" name="Aust. J. Biol. Sci.">
        <title>Oestrogen sulfotransferase: isolation of a high specific activity species from bovine placenta.</title>
        <authorList>
            <person name="Moore S.S."/>
            <person name="Thompson E.O.P."/>
            <person name="Nash A.R."/>
        </authorList>
    </citation>
    <scope>PARTIAL PROTEIN SEQUENCE</scope>
    <source>
        <tissue>Placenta</tissue>
    </source>
</reference>
<reference key="3">
    <citation type="journal article" date="1991" name="Biochim. Biophys. Acta">
        <title>Enzymic synthesis of steroid sulphates. XVII. On the structure of bovine estrogen sulphotransferase.</title>
        <authorList>
            <person name="Adams J.B."/>
        </authorList>
    </citation>
    <scope>PROTEIN SEQUENCE OF 146-160 AND 206-220</scope>
    <scope>SUBUNIT</scope>
    <scope>CATALYTIC ACTIVITY</scope>
    <scope>FUNCTION</scope>
    <source>
        <tissue>Placenta</tissue>
    </source>
</reference>
<protein>
    <recommendedName>
        <fullName>Sulfotransferase 1E1</fullName>
        <shortName>ST1E1</shortName>
        <ecNumber evidence="5">2.8.2.4</ecNumber>
    </recommendedName>
    <alternativeName>
        <fullName>Estrogen sulfotransferase</fullName>
    </alternativeName>
    <alternativeName>
        <fullName>Sulfotransferase, estrogen-preferring</fullName>
    </alternativeName>
</protein>
<keyword id="KW-0963">Cytoplasm</keyword>
<keyword id="KW-0903">Direct protein sequencing</keyword>
<keyword id="KW-0443">Lipid metabolism</keyword>
<keyword id="KW-0446">Lipid-binding</keyword>
<keyword id="KW-0597">Phosphoprotein</keyword>
<keyword id="KW-1185">Reference proteome</keyword>
<keyword id="KW-0754">Steroid-binding</keyword>
<keyword id="KW-0808">Transferase</keyword>
<comment type="function">
    <text evidence="2 5">Sulfotransferase that utilizes 3'-phospho-5'-adenylyl sulfate (PAPS) as sulfonate donor to catalyze the sulfate conjugation of estradiol and estrone (By similarity) (PubMed:1900200). Is a key enzyme in estrogen homeostasis, the sulfation of estrogens leads to their inactivation. Also sulfates dehydroepiandrosterone (DHEA), pregnenolone, (24S)-hydroxycholesterol and xenobiotic compounds like ethinylestradiol, equalenin, diethyl stilbesterol and 1-naphthol at significantly lower efficiency. Does not sulfonate cortisol, testosterone and dopamine (By similarity). May play a role in gut microbiota-host metabolic interaction. O-sulfonates 4-ethylphenol (4-EP), a dietary tyrosine-derived metabolite produced by gut bacteria. The product 4-EPS crosses the blood-brain barrier and may negatively regulate oligodendrocyte maturation and myelination, affecting the functional connectivity of different brain regions associated with the limbic system.</text>
</comment>
<comment type="catalytic activity">
    <reaction evidence="2">
        <text>estrone + 3'-phosphoadenylyl sulfate = estrone 3-sulfate + adenosine 3',5'-bisphosphate + H(+)</text>
        <dbReference type="Rhea" id="RHEA:15973"/>
        <dbReference type="ChEBI" id="CHEBI:15378"/>
        <dbReference type="ChEBI" id="CHEBI:17263"/>
        <dbReference type="ChEBI" id="CHEBI:58339"/>
        <dbReference type="ChEBI" id="CHEBI:58343"/>
        <dbReference type="ChEBI" id="CHEBI:60050"/>
        <dbReference type="EC" id="2.8.2.4"/>
    </reaction>
    <physiologicalReaction direction="left-to-right" evidence="2">
        <dbReference type="Rhea" id="RHEA:15974"/>
    </physiologicalReaction>
</comment>
<comment type="catalytic activity">
    <reaction evidence="2">
        <text>(24S)-hydroxycholesterol + 3'-phosphoadenylyl sulfate = (24S)-hydroxycholesterol 3-sulfate + adenosine 3',5'-bisphosphate + H(+)</text>
        <dbReference type="Rhea" id="RHEA:52348"/>
        <dbReference type="ChEBI" id="CHEBI:15378"/>
        <dbReference type="ChEBI" id="CHEBI:34310"/>
        <dbReference type="ChEBI" id="CHEBI:58339"/>
        <dbReference type="ChEBI" id="CHEBI:58343"/>
        <dbReference type="ChEBI" id="CHEBI:136567"/>
    </reaction>
    <physiologicalReaction direction="left-to-right" evidence="2">
        <dbReference type="Rhea" id="RHEA:52349"/>
    </physiologicalReaction>
</comment>
<comment type="catalytic activity">
    <reaction evidence="5">
        <text>17beta-estradiol + 3'-phosphoadenylyl sulfate = 17beta-estradiol 3-sulfate + adenosine 3',5'-bisphosphate + H(+)</text>
        <dbReference type="Rhea" id="RHEA:52372"/>
        <dbReference type="ChEBI" id="CHEBI:15378"/>
        <dbReference type="ChEBI" id="CHEBI:16469"/>
        <dbReference type="ChEBI" id="CHEBI:58339"/>
        <dbReference type="ChEBI" id="CHEBI:58343"/>
        <dbReference type="ChEBI" id="CHEBI:136582"/>
    </reaction>
    <physiologicalReaction direction="left-to-right" evidence="7">
        <dbReference type="Rhea" id="RHEA:52373"/>
    </physiologicalReaction>
</comment>
<comment type="catalytic activity">
    <reaction evidence="2">
        <text>3beta-hydroxyandrost-5-en-17-one + 3'-phosphoadenylyl sulfate = dehydroepiandrosterone 3-sulfate + adenosine 3',5'-bisphosphate + H(+)</text>
        <dbReference type="Rhea" id="RHEA:51216"/>
        <dbReference type="ChEBI" id="CHEBI:15378"/>
        <dbReference type="ChEBI" id="CHEBI:28689"/>
        <dbReference type="ChEBI" id="CHEBI:57905"/>
        <dbReference type="ChEBI" id="CHEBI:58339"/>
        <dbReference type="ChEBI" id="CHEBI:58343"/>
    </reaction>
</comment>
<comment type="catalytic activity">
    <reaction evidence="2">
        <text>4-ethylphenol + 3'-phosphoadenylyl sulfate = 4-ethylphenyl sulfate + adenosine 3',5'-bisphosphate + H(+)</text>
        <dbReference type="Rhea" id="RHEA:70607"/>
        <dbReference type="ChEBI" id="CHEBI:15378"/>
        <dbReference type="ChEBI" id="CHEBI:49584"/>
        <dbReference type="ChEBI" id="CHEBI:58339"/>
        <dbReference type="ChEBI" id="CHEBI:58343"/>
        <dbReference type="ChEBI" id="CHEBI:133681"/>
    </reaction>
    <physiologicalReaction direction="left-to-right" evidence="2">
        <dbReference type="Rhea" id="RHEA:70608"/>
    </physiologicalReaction>
</comment>
<comment type="activity regulation">
    <text evidence="2">Inhibited by estradiol.</text>
</comment>
<comment type="subunit">
    <text evidence="5">Homodimer.</text>
</comment>
<comment type="subcellular location">
    <subcellularLocation>
        <location evidence="1">Cytoplasm</location>
        <location evidence="1">Cytosol</location>
    </subcellularLocation>
</comment>
<comment type="induction">
    <text>By progesterone.</text>
</comment>
<comment type="similarity">
    <text evidence="6">Belongs to the sulfotransferase 1 family.</text>
</comment>
<sequence length="295" mass="34640">MSSSKPSFSDYFGKLGGIPMYKKFIEQFHNVEEFEARPDDLVIVTYPKSGTTWLSEIICMIYNNGDVEKCKEDVIFNRVPYLECSTEHVMKGVKQLNEMASPRIVKSHLPVKLLPVSFWEKNCKIIYLSRNAKDVVVSYYFLILMVTAIPDPDSFQDFVEKFMDGEVPYGSWFEHTKSWWEKSKNPQVLFLFYEDMKENIRKEVMKLLEFLGRKASDELVDKIIKHTSFQEMKNNPSTNYTTLPDEVMNQKVSPFMRKGDVGDWKNHFTVALNEKFDMHYEQQMKGSTLKFRTKI</sequence>
<name>ST1E1_BOVIN</name>
<evidence type="ECO:0000250" key="1">
    <source>
        <dbReference type="UniProtKB" id="P49887"/>
    </source>
</evidence>
<evidence type="ECO:0000250" key="2">
    <source>
        <dbReference type="UniProtKB" id="P49888"/>
    </source>
</evidence>
<evidence type="ECO:0000250" key="3">
    <source>
        <dbReference type="UniProtKB" id="P49891"/>
    </source>
</evidence>
<evidence type="ECO:0000255" key="4"/>
<evidence type="ECO:0000269" key="5">
    <source>
    </source>
</evidence>
<evidence type="ECO:0000305" key="6"/>
<evidence type="ECO:0000305" key="7">
    <source>
    </source>
</evidence>
<organism>
    <name type="scientific">Bos taurus</name>
    <name type="common">Bovine</name>
    <dbReference type="NCBI Taxonomy" id="9913"/>
    <lineage>
        <taxon>Eukaryota</taxon>
        <taxon>Metazoa</taxon>
        <taxon>Chordata</taxon>
        <taxon>Craniata</taxon>
        <taxon>Vertebrata</taxon>
        <taxon>Euteleostomi</taxon>
        <taxon>Mammalia</taxon>
        <taxon>Eutheria</taxon>
        <taxon>Laurasiatheria</taxon>
        <taxon>Artiodactyla</taxon>
        <taxon>Ruminantia</taxon>
        <taxon>Pecora</taxon>
        <taxon>Bovidae</taxon>
        <taxon>Bovinae</taxon>
        <taxon>Bos</taxon>
    </lineage>
</organism>
<proteinExistence type="evidence at protein level"/>
<feature type="chain" id="PRO_0000085151" description="Sulfotransferase 1E1">
    <location>
        <begin position="1"/>
        <end position="295"/>
    </location>
</feature>
<feature type="active site" description="Proton acceptor" evidence="3">
    <location>
        <position position="108"/>
    </location>
</feature>
<feature type="binding site" evidence="3">
    <location>
        <begin position="48"/>
        <end position="53"/>
    </location>
    <ligand>
        <name>3'-phosphoadenylyl sulfate</name>
        <dbReference type="ChEBI" id="CHEBI:58339"/>
    </ligand>
</feature>
<feature type="binding site" evidence="3">
    <location>
        <begin position="106"/>
        <end position="108"/>
    </location>
    <ligand>
        <name>substrate</name>
    </ligand>
</feature>
<feature type="binding site" evidence="3">
    <location>
        <position position="130"/>
    </location>
    <ligand>
        <name>3'-phosphoadenylyl sulfate</name>
        <dbReference type="ChEBI" id="CHEBI:58339"/>
    </ligand>
</feature>
<feature type="binding site" evidence="3">
    <location>
        <position position="138"/>
    </location>
    <ligand>
        <name>3'-phosphoadenylyl sulfate</name>
        <dbReference type="ChEBI" id="CHEBI:58339"/>
    </ligand>
</feature>
<feature type="binding site" evidence="3">
    <location>
        <position position="193"/>
    </location>
    <ligand>
        <name>3'-phosphoadenylyl sulfate</name>
        <dbReference type="ChEBI" id="CHEBI:58339"/>
    </ligand>
</feature>
<feature type="binding site" evidence="3">
    <location>
        <begin position="227"/>
        <end position="232"/>
    </location>
    <ligand>
        <name>3'-phosphoadenylyl sulfate</name>
        <dbReference type="ChEBI" id="CHEBI:58339"/>
    </ligand>
</feature>
<feature type="binding site" evidence="3">
    <location>
        <begin position="257"/>
        <end position="259"/>
    </location>
    <ligand>
        <name>3'-phosphoadenylyl sulfate</name>
        <dbReference type="ChEBI" id="CHEBI:58339"/>
    </ligand>
</feature>
<feature type="modified residue" description="Phosphoserine; by PKA" evidence="4">
    <location>
        <position position="216"/>
    </location>
</feature>
<feature type="modified residue" description="Phosphoserine; by PKA" evidence="4">
    <location>
        <position position="228"/>
    </location>
</feature>
<feature type="sequence conflict" description="In Ref. 2; AA sequence." evidence="6" ref="2">
    <original>S</original>
    <variation>E</variation>
    <location>
        <position position="117"/>
    </location>
</feature>
<feature type="sequence conflict" description="In Ref. 2; AA sequence." evidence="6" ref="2">
    <original>S</original>
    <variation>E</variation>
    <location>
        <position position="171"/>
    </location>
</feature>
<feature type="sequence conflict" description="In Ref. 2; AA sequence." evidence="6" ref="2">
    <original>M</original>
    <variation>Q</variation>
    <location>
        <position position="248"/>
    </location>
</feature>
<dbReference type="EC" id="2.8.2.4" evidence="5"/>
<dbReference type="EMBL" id="M54942">
    <property type="protein sequence ID" value="AAA30679.1"/>
    <property type="molecule type" value="mRNA"/>
</dbReference>
<dbReference type="EMBL" id="X56395">
    <property type="protein sequence ID" value="CAA39806.1"/>
    <property type="molecule type" value="mRNA"/>
</dbReference>
<dbReference type="PIR" id="S29045">
    <property type="entry name" value="S29045"/>
</dbReference>
<dbReference type="SMR" id="P19217"/>
<dbReference type="FunCoup" id="P19217">
    <property type="interactions" value="12"/>
</dbReference>
<dbReference type="STRING" id="9913.ENSBTAP00000015862"/>
<dbReference type="BindingDB" id="P19217"/>
<dbReference type="ChEMBL" id="CHEMBL2244"/>
<dbReference type="PaxDb" id="9913-ENSBTAP00000015862"/>
<dbReference type="eggNOG" id="KOG1584">
    <property type="taxonomic scope" value="Eukaryota"/>
</dbReference>
<dbReference type="InParanoid" id="P19217"/>
<dbReference type="OrthoDB" id="205623at2759"/>
<dbReference type="BRENDA" id="2.8.2.4">
    <property type="organism ID" value="908"/>
</dbReference>
<dbReference type="Proteomes" id="UP000009136">
    <property type="component" value="Unplaced"/>
</dbReference>
<dbReference type="GO" id="GO:0005737">
    <property type="term" value="C:cytoplasm"/>
    <property type="evidence" value="ECO:0000318"/>
    <property type="project" value="GO_Central"/>
</dbReference>
<dbReference type="GO" id="GO:0005829">
    <property type="term" value="C:cytosol"/>
    <property type="evidence" value="ECO:0000250"/>
    <property type="project" value="UniProtKB"/>
</dbReference>
<dbReference type="GO" id="GO:0004062">
    <property type="term" value="F:aryl sulfotransferase activity"/>
    <property type="evidence" value="ECO:0000318"/>
    <property type="project" value="GO_Central"/>
</dbReference>
<dbReference type="GO" id="GO:0004304">
    <property type="term" value="F:estrone sulfotransferase activity"/>
    <property type="evidence" value="ECO:0007669"/>
    <property type="project" value="UniProtKB-EC"/>
</dbReference>
<dbReference type="GO" id="GO:0005496">
    <property type="term" value="F:steroid binding"/>
    <property type="evidence" value="ECO:0007669"/>
    <property type="project" value="UniProtKB-KW"/>
</dbReference>
<dbReference type="GO" id="GO:0050294">
    <property type="term" value="F:steroid sulfotransferase activity"/>
    <property type="evidence" value="ECO:0000250"/>
    <property type="project" value="UniProtKB"/>
</dbReference>
<dbReference type="GO" id="GO:0008210">
    <property type="term" value="P:estrogen metabolic process"/>
    <property type="evidence" value="ECO:0000250"/>
    <property type="project" value="UniProtKB"/>
</dbReference>
<dbReference type="GO" id="GO:0051923">
    <property type="term" value="P:sulfation"/>
    <property type="evidence" value="ECO:0000318"/>
    <property type="project" value="GO_Central"/>
</dbReference>
<dbReference type="FunFam" id="3.40.50.300:FF:000433">
    <property type="entry name" value="Estrogen sulfotransferase"/>
    <property type="match status" value="1"/>
</dbReference>
<dbReference type="Gene3D" id="3.40.50.300">
    <property type="entry name" value="P-loop containing nucleotide triphosphate hydrolases"/>
    <property type="match status" value="1"/>
</dbReference>
<dbReference type="InterPro" id="IPR027417">
    <property type="entry name" value="P-loop_NTPase"/>
</dbReference>
<dbReference type="InterPro" id="IPR000863">
    <property type="entry name" value="Sulfotransferase_dom"/>
</dbReference>
<dbReference type="PANTHER" id="PTHR11783">
    <property type="entry name" value="SULFOTRANSFERASE SULT"/>
    <property type="match status" value="1"/>
</dbReference>
<dbReference type="Pfam" id="PF00685">
    <property type="entry name" value="Sulfotransfer_1"/>
    <property type="match status" value="1"/>
</dbReference>
<dbReference type="SUPFAM" id="SSF52540">
    <property type="entry name" value="P-loop containing nucleoside triphosphate hydrolases"/>
    <property type="match status" value="1"/>
</dbReference>